<feature type="chain" id="PRO_1000129336" description="Ribonuclease PH">
    <location>
        <begin position="1"/>
        <end position="261"/>
    </location>
</feature>
<feature type="binding site" evidence="1">
    <location>
        <position position="87"/>
    </location>
    <ligand>
        <name>phosphate</name>
        <dbReference type="ChEBI" id="CHEBI:43474"/>
        <note>substrate</note>
    </ligand>
</feature>
<feature type="binding site" evidence="1">
    <location>
        <begin position="125"/>
        <end position="127"/>
    </location>
    <ligand>
        <name>phosphate</name>
        <dbReference type="ChEBI" id="CHEBI:43474"/>
        <note>substrate</note>
    </ligand>
</feature>
<organism>
    <name type="scientific">Desulforudis audaxviator (strain MP104C)</name>
    <dbReference type="NCBI Taxonomy" id="477974"/>
    <lineage>
        <taxon>Bacteria</taxon>
        <taxon>Bacillati</taxon>
        <taxon>Bacillota</taxon>
        <taxon>Clostridia</taxon>
        <taxon>Thermoanaerobacterales</taxon>
        <taxon>Candidatus Desulforudaceae</taxon>
        <taxon>Candidatus Desulforudis</taxon>
    </lineage>
</organism>
<dbReference type="EC" id="2.7.7.56" evidence="1"/>
<dbReference type="EMBL" id="CP000860">
    <property type="protein sequence ID" value="ACA60011.1"/>
    <property type="molecule type" value="Genomic_DNA"/>
</dbReference>
<dbReference type="RefSeq" id="WP_012302593.1">
    <property type="nucleotide sequence ID" value="NC_010424.1"/>
</dbReference>
<dbReference type="SMR" id="B1I4W9"/>
<dbReference type="STRING" id="477974.Daud_1505"/>
<dbReference type="KEGG" id="dau:Daud_1505"/>
<dbReference type="eggNOG" id="COG0689">
    <property type="taxonomic scope" value="Bacteria"/>
</dbReference>
<dbReference type="HOGENOM" id="CLU_050858_0_0_9"/>
<dbReference type="OrthoDB" id="9807456at2"/>
<dbReference type="Proteomes" id="UP000008544">
    <property type="component" value="Chromosome"/>
</dbReference>
<dbReference type="GO" id="GO:0000175">
    <property type="term" value="F:3'-5'-RNA exonuclease activity"/>
    <property type="evidence" value="ECO:0007669"/>
    <property type="project" value="UniProtKB-UniRule"/>
</dbReference>
<dbReference type="GO" id="GO:0000049">
    <property type="term" value="F:tRNA binding"/>
    <property type="evidence" value="ECO:0007669"/>
    <property type="project" value="UniProtKB-UniRule"/>
</dbReference>
<dbReference type="GO" id="GO:0009022">
    <property type="term" value="F:tRNA nucleotidyltransferase activity"/>
    <property type="evidence" value="ECO:0007669"/>
    <property type="project" value="UniProtKB-UniRule"/>
</dbReference>
<dbReference type="GO" id="GO:0016075">
    <property type="term" value="P:rRNA catabolic process"/>
    <property type="evidence" value="ECO:0007669"/>
    <property type="project" value="UniProtKB-UniRule"/>
</dbReference>
<dbReference type="GO" id="GO:0006364">
    <property type="term" value="P:rRNA processing"/>
    <property type="evidence" value="ECO:0007669"/>
    <property type="project" value="UniProtKB-KW"/>
</dbReference>
<dbReference type="GO" id="GO:0008033">
    <property type="term" value="P:tRNA processing"/>
    <property type="evidence" value="ECO:0007669"/>
    <property type="project" value="UniProtKB-UniRule"/>
</dbReference>
<dbReference type="CDD" id="cd11362">
    <property type="entry name" value="RNase_PH_bact"/>
    <property type="match status" value="1"/>
</dbReference>
<dbReference type="FunFam" id="3.30.230.70:FF:000003">
    <property type="entry name" value="Ribonuclease PH"/>
    <property type="match status" value="1"/>
</dbReference>
<dbReference type="Gene3D" id="3.30.230.70">
    <property type="entry name" value="GHMP Kinase, N-terminal domain"/>
    <property type="match status" value="1"/>
</dbReference>
<dbReference type="HAMAP" id="MF_00564">
    <property type="entry name" value="RNase_PH"/>
    <property type="match status" value="1"/>
</dbReference>
<dbReference type="InterPro" id="IPR001247">
    <property type="entry name" value="ExoRNase_PH_dom1"/>
</dbReference>
<dbReference type="InterPro" id="IPR015847">
    <property type="entry name" value="ExoRNase_PH_dom2"/>
</dbReference>
<dbReference type="InterPro" id="IPR036345">
    <property type="entry name" value="ExoRNase_PH_dom2_sf"/>
</dbReference>
<dbReference type="InterPro" id="IPR027408">
    <property type="entry name" value="PNPase/RNase_PH_dom_sf"/>
</dbReference>
<dbReference type="InterPro" id="IPR020568">
    <property type="entry name" value="Ribosomal_Su5_D2-typ_SF"/>
</dbReference>
<dbReference type="InterPro" id="IPR050080">
    <property type="entry name" value="RNase_PH"/>
</dbReference>
<dbReference type="InterPro" id="IPR002381">
    <property type="entry name" value="RNase_PH_bac-type"/>
</dbReference>
<dbReference type="InterPro" id="IPR018336">
    <property type="entry name" value="RNase_PH_CS"/>
</dbReference>
<dbReference type="NCBIfam" id="TIGR01966">
    <property type="entry name" value="RNasePH"/>
    <property type="match status" value="1"/>
</dbReference>
<dbReference type="PANTHER" id="PTHR11953">
    <property type="entry name" value="EXOSOME COMPLEX COMPONENT"/>
    <property type="match status" value="1"/>
</dbReference>
<dbReference type="PANTHER" id="PTHR11953:SF0">
    <property type="entry name" value="EXOSOME COMPLEX COMPONENT RRP41"/>
    <property type="match status" value="1"/>
</dbReference>
<dbReference type="Pfam" id="PF01138">
    <property type="entry name" value="RNase_PH"/>
    <property type="match status" value="1"/>
</dbReference>
<dbReference type="Pfam" id="PF03725">
    <property type="entry name" value="RNase_PH_C"/>
    <property type="match status" value="1"/>
</dbReference>
<dbReference type="SUPFAM" id="SSF55666">
    <property type="entry name" value="Ribonuclease PH domain 2-like"/>
    <property type="match status" value="1"/>
</dbReference>
<dbReference type="SUPFAM" id="SSF54211">
    <property type="entry name" value="Ribosomal protein S5 domain 2-like"/>
    <property type="match status" value="1"/>
</dbReference>
<dbReference type="PROSITE" id="PS01277">
    <property type="entry name" value="RIBONUCLEASE_PH"/>
    <property type="match status" value="1"/>
</dbReference>
<gene>
    <name evidence="1" type="primary">rph</name>
    <name type="ordered locus">Daud_1505</name>
</gene>
<name>RNPH_DESAP</name>
<keyword id="KW-0548">Nucleotidyltransferase</keyword>
<keyword id="KW-1185">Reference proteome</keyword>
<keyword id="KW-0694">RNA-binding</keyword>
<keyword id="KW-0698">rRNA processing</keyword>
<keyword id="KW-0808">Transferase</keyword>
<keyword id="KW-0819">tRNA processing</keyword>
<keyword id="KW-0820">tRNA-binding</keyword>
<protein>
    <recommendedName>
        <fullName evidence="1">Ribonuclease PH</fullName>
        <shortName evidence="1">RNase PH</shortName>
        <ecNumber evidence="1">2.7.7.56</ecNumber>
    </recommendedName>
    <alternativeName>
        <fullName evidence="1">tRNA nucleotidyltransferase</fullName>
    </alternativeName>
</protein>
<comment type="function">
    <text evidence="1">Phosphorolytic 3'-5' exoribonuclease that plays an important role in tRNA 3'-end maturation. Removes nucleotide residues following the 3'-CCA terminus of tRNAs; can also add nucleotides to the ends of RNA molecules by using nucleoside diphosphates as substrates, but this may not be physiologically important. Probably plays a role in initiation of 16S rRNA degradation (leading to ribosome degradation) during starvation.</text>
</comment>
<comment type="catalytic activity">
    <reaction evidence="1">
        <text>tRNA(n+1) + phosphate = tRNA(n) + a ribonucleoside 5'-diphosphate</text>
        <dbReference type="Rhea" id="RHEA:10628"/>
        <dbReference type="Rhea" id="RHEA-COMP:17343"/>
        <dbReference type="Rhea" id="RHEA-COMP:17344"/>
        <dbReference type="ChEBI" id="CHEBI:43474"/>
        <dbReference type="ChEBI" id="CHEBI:57930"/>
        <dbReference type="ChEBI" id="CHEBI:173114"/>
        <dbReference type="EC" id="2.7.7.56"/>
    </reaction>
</comment>
<comment type="subunit">
    <text evidence="1">Homohexameric ring arranged as a trimer of dimers.</text>
</comment>
<comment type="similarity">
    <text evidence="1">Belongs to the RNase PH family.</text>
</comment>
<reference key="1">
    <citation type="submission" date="2007-10" db="EMBL/GenBank/DDBJ databases">
        <title>Complete sequence of chromosome of Desulforudis audaxviator MP104C.</title>
        <authorList>
            <person name="Copeland A."/>
            <person name="Lucas S."/>
            <person name="Lapidus A."/>
            <person name="Barry K."/>
            <person name="Glavina del Rio T."/>
            <person name="Dalin E."/>
            <person name="Tice H."/>
            <person name="Bruce D."/>
            <person name="Pitluck S."/>
            <person name="Lowry S.R."/>
            <person name="Larimer F."/>
            <person name="Land M.L."/>
            <person name="Hauser L."/>
            <person name="Kyrpides N."/>
            <person name="Ivanova N.N."/>
            <person name="Richardson P."/>
        </authorList>
    </citation>
    <scope>NUCLEOTIDE SEQUENCE [LARGE SCALE GENOMIC DNA]</scope>
    <source>
        <strain>MP104C</strain>
    </source>
</reference>
<evidence type="ECO:0000255" key="1">
    <source>
        <dbReference type="HAMAP-Rule" id="MF_00564"/>
    </source>
</evidence>
<accession>B1I4W9</accession>
<proteinExistence type="inferred from homology"/>
<sequence length="261" mass="27715">MIRVDGRAPAQMRPVYITRHYNKYAEGSALIEVGDTRVICTASIDNRVPTFLKGAGKGWVTAEFGMLPRATGVRGIRESVKGHPGGRSLEIQRLIGRSLRAVVDLPALGERTVILDCDVIQADGGTRTAAITGGFVALVDAMQTLVTEGVTPRLPVLDYVAATSVGLFEGEAVLDLCFAEDSAAEVDFNVVMTGTGRFVEVQGTGEGTTFERADVDRLLDLAVVGIRSLVEQQRAVLGSLAEEIGKRRGNQNGAAGTGDQK</sequence>